<dbReference type="EC" id="4.4.1.21" evidence="1"/>
<dbReference type="EMBL" id="AM295007">
    <property type="protein sequence ID" value="CAM29784.1"/>
    <property type="molecule type" value="Genomic_DNA"/>
</dbReference>
<dbReference type="RefSeq" id="WP_002988938.1">
    <property type="nucleotide sequence ID" value="NC_009332.1"/>
</dbReference>
<dbReference type="SMR" id="A2RD59"/>
<dbReference type="KEGG" id="spf:SpyM50442"/>
<dbReference type="HOGENOM" id="CLU_107531_2_1_9"/>
<dbReference type="GO" id="GO:0005506">
    <property type="term" value="F:iron ion binding"/>
    <property type="evidence" value="ECO:0007669"/>
    <property type="project" value="InterPro"/>
</dbReference>
<dbReference type="GO" id="GO:0043768">
    <property type="term" value="F:S-ribosylhomocysteine lyase activity"/>
    <property type="evidence" value="ECO:0007669"/>
    <property type="project" value="UniProtKB-UniRule"/>
</dbReference>
<dbReference type="GO" id="GO:0009372">
    <property type="term" value="P:quorum sensing"/>
    <property type="evidence" value="ECO:0007669"/>
    <property type="project" value="UniProtKB-UniRule"/>
</dbReference>
<dbReference type="Gene3D" id="3.30.1360.80">
    <property type="entry name" value="S-ribosylhomocysteinase (LuxS)"/>
    <property type="match status" value="1"/>
</dbReference>
<dbReference type="HAMAP" id="MF_00091">
    <property type="entry name" value="LuxS"/>
    <property type="match status" value="1"/>
</dbReference>
<dbReference type="InterPro" id="IPR037005">
    <property type="entry name" value="LuxS_sf"/>
</dbReference>
<dbReference type="InterPro" id="IPR011249">
    <property type="entry name" value="Metalloenz_LuxS/M16"/>
</dbReference>
<dbReference type="InterPro" id="IPR003815">
    <property type="entry name" value="S-ribosylhomocysteinase"/>
</dbReference>
<dbReference type="NCBIfam" id="NF002607">
    <property type="entry name" value="PRK02260.2-5"/>
    <property type="match status" value="1"/>
</dbReference>
<dbReference type="NCBIfam" id="NF002608">
    <property type="entry name" value="PRK02260.3-1"/>
    <property type="match status" value="1"/>
</dbReference>
<dbReference type="PANTHER" id="PTHR35799">
    <property type="entry name" value="S-RIBOSYLHOMOCYSTEINE LYASE"/>
    <property type="match status" value="1"/>
</dbReference>
<dbReference type="PANTHER" id="PTHR35799:SF1">
    <property type="entry name" value="S-RIBOSYLHOMOCYSTEINE LYASE"/>
    <property type="match status" value="1"/>
</dbReference>
<dbReference type="Pfam" id="PF02664">
    <property type="entry name" value="LuxS"/>
    <property type="match status" value="1"/>
</dbReference>
<dbReference type="PIRSF" id="PIRSF006160">
    <property type="entry name" value="AI2"/>
    <property type="match status" value="1"/>
</dbReference>
<dbReference type="PRINTS" id="PR01487">
    <property type="entry name" value="LUXSPROTEIN"/>
</dbReference>
<dbReference type="SUPFAM" id="SSF63411">
    <property type="entry name" value="LuxS/MPP-like metallohydrolase"/>
    <property type="match status" value="1"/>
</dbReference>
<proteinExistence type="inferred from homology"/>
<sequence length="160" mass="17979">MTKEVIVESFELDHTIVKAPYVRLISEEFGPKGDRITNFDVRLVQPNQNSIETAGLHTIEHLLAKLIRQRIDGMIDCSPFGCRTGFHLIMWGKHSSTDIAKVIKSSLEEIATGITWEDVPGTTLESCGNYKDHSLFAAKEWAQLIIDQGISDDPFSRHVI</sequence>
<gene>
    <name evidence="1" type="primary">luxS</name>
    <name type="ordered locus">SpyM50442</name>
</gene>
<evidence type="ECO:0000255" key="1">
    <source>
        <dbReference type="HAMAP-Rule" id="MF_00091"/>
    </source>
</evidence>
<feature type="chain" id="PRO_0000298047" description="S-ribosylhomocysteine lyase">
    <location>
        <begin position="1"/>
        <end position="160"/>
    </location>
</feature>
<feature type="binding site" evidence="1">
    <location>
        <position position="57"/>
    </location>
    <ligand>
        <name>Fe cation</name>
        <dbReference type="ChEBI" id="CHEBI:24875"/>
    </ligand>
</feature>
<feature type="binding site" evidence="1">
    <location>
        <position position="61"/>
    </location>
    <ligand>
        <name>Fe cation</name>
        <dbReference type="ChEBI" id="CHEBI:24875"/>
    </ligand>
</feature>
<feature type="binding site" evidence="1">
    <location>
        <position position="127"/>
    </location>
    <ligand>
        <name>Fe cation</name>
        <dbReference type="ChEBI" id="CHEBI:24875"/>
    </ligand>
</feature>
<organism>
    <name type="scientific">Streptococcus pyogenes serotype M5 (strain Manfredo)</name>
    <dbReference type="NCBI Taxonomy" id="160491"/>
    <lineage>
        <taxon>Bacteria</taxon>
        <taxon>Bacillati</taxon>
        <taxon>Bacillota</taxon>
        <taxon>Bacilli</taxon>
        <taxon>Lactobacillales</taxon>
        <taxon>Streptococcaceae</taxon>
        <taxon>Streptococcus</taxon>
    </lineage>
</organism>
<protein>
    <recommendedName>
        <fullName evidence="1">S-ribosylhomocysteine lyase</fullName>
        <ecNumber evidence="1">4.4.1.21</ecNumber>
    </recommendedName>
    <alternativeName>
        <fullName evidence="1">AI-2 synthesis protein</fullName>
    </alternativeName>
    <alternativeName>
        <fullName evidence="1">Autoinducer-2 production protein LuxS</fullName>
    </alternativeName>
</protein>
<comment type="function">
    <text evidence="1">Involved in the synthesis of autoinducer 2 (AI-2) which is secreted by bacteria and is used to communicate both the cell density and the metabolic potential of the environment. The regulation of gene expression in response to changes in cell density is called quorum sensing. Catalyzes the transformation of S-ribosylhomocysteine (RHC) to homocysteine (HC) and 4,5-dihydroxy-2,3-pentadione (DPD).</text>
</comment>
<comment type="catalytic activity">
    <reaction evidence="1">
        <text>S-(5-deoxy-D-ribos-5-yl)-L-homocysteine = (S)-4,5-dihydroxypentane-2,3-dione + L-homocysteine</text>
        <dbReference type="Rhea" id="RHEA:17753"/>
        <dbReference type="ChEBI" id="CHEBI:29484"/>
        <dbReference type="ChEBI" id="CHEBI:58195"/>
        <dbReference type="ChEBI" id="CHEBI:58199"/>
        <dbReference type="EC" id="4.4.1.21"/>
    </reaction>
</comment>
<comment type="cofactor">
    <cofactor evidence="1">
        <name>Fe cation</name>
        <dbReference type="ChEBI" id="CHEBI:24875"/>
    </cofactor>
    <text evidence="1">Binds 1 Fe cation per subunit.</text>
</comment>
<comment type="subunit">
    <text evidence="1">Homodimer.</text>
</comment>
<comment type="similarity">
    <text evidence="1">Belongs to the LuxS family.</text>
</comment>
<accession>A2RD59</accession>
<reference key="1">
    <citation type="journal article" date="2007" name="J. Bacteriol.">
        <title>Complete genome of acute rheumatic fever-associated serotype M5 Streptococcus pyogenes strain Manfredo.</title>
        <authorList>
            <person name="Holden M.T.G."/>
            <person name="Scott A."/>
            <person name="Cherevach I."/>
            <person name="Chillingworth T."/>
            <person name="Churcher C."/>
            <person name="Cronin A."/>
            <person name="Dowd L."/>
            <person name="Feltwell T."/>
            <person name="Hamlin N."/>
            <person name="Holroyd S."/>
            <person name="Jagels K."/>
            <person name="Moule S."/>
            <person name="Mungall K."/>
            <person name="Quail M.A."/>
            <person name="Price C."/>
            <person name="Rabbinowitsch E."/>
            <person name="Sharp S."/>
            <person name="Skelton J."/>
            <person name="Whitehead S."/>
            <person name="Barrell B.G."/>
            <person name="Kehoe M."/>
            <person name="Parkhill J."/>
        </authorList>
    </citation>
    <scope>NUCLEOTIDE SEQUENCE [LARGE SCALE GENOMIC DNA]</scope>
    <source>
        <strain>Manfredo</strain>
    </source>
</reference>
<keyword id="KW-0071">Autoinducer synthesis</keyword>
<keyword id="KW-0408">Iron</keyword>
<keyword id="KW-0456">Lyase</keyword>
<keyword id="KW-0479">Metal-binding</keyword>
<keyword id="KW-0673">Quorum sensing</keyword>
<name>LUXS_STRPG</name>